<comment type="function">
    <text evidence="1">Involved in copper export.</text>
</comment>
<comment type="catalytic activity">
    <reaction>
        <text>Cu(+)(in) + ATP + H2O = Cu(+)(out) + ADP + phosphate + H(+)</text>
        <dbReference type="Rhea" id="RHEA:25792"/>
        <dbReference type="ChEBI" id="CHEBI:15377"/>
        <dbReference type="ChEBI" id="CHEBI:15378"/>
        <dbReference type="ChEBI" id="CHEBI:30616"/>
        <dbReference type="ChEBI" id="CHEBI:43474"/>
        <dbReference type="ChEBI" id="CHEBI:49552"/>
        <dbReference type="ChEBI" id="CHEBI:456216"/>
        <dbReference type="EC" id="7.2.2.8"/>
    </reaction>
</comment>
<comment type="subcellular location">
    <subcellularLocation>
        <location evidence="1">Cell membrane</location>
        <topology evidence="1">Multi-pass membrane protein</topology>
    </subcellularLocation>
</comment>
<comment type="similarity">
    <text evidence="4">Belongs to the cation transport ATPase (P-type) (TC 3.A.3) family. Type IB subfamily.</text>
</comment>
<accession>Q6GDP1</accession>
<gene>
    <name type="primary">copA</name>
    <name type="ordered locus">SAR2637</name>
</gene>
<name>COPA_STAAR</name>
<sequence>MANTKKTTLDITGMTCAACSNRIEKKLNKLDDVNAQVNLTTEKATVEYNPDRHDVQEFINTIQHLGYGVAVETVELDITGMTCAACSSRIEKVLNKMDGVQNATVNLTTEQAKVDYYPEETDADKLVTRIQKLGYDASIKDNNRDQTSRKAEALQHKLIKLIISAVLSLPLLMLMFVHLFNMHIPALFTNPWFQFILATPVQFIIGWQFYVGAYKNLRNGGANMDVLVAVGTSAAYFYSIYEMVRWLNGSTTQPHLYFETSAVLITLILFGKYLEARAKSQTTNALGELLSLQAKEARILKDGNEVMIPLNEVHVGDTLIVKPGEKIPVDGKIIKGMTAIDESMLTGESIPVEKNVDDTVIGSTMNKNGTITMTATKVGGDTALANIIKVVEEAQSSKAPIQRLADIISGYFVPIVVGIALLTFIVWITLVTPGTFEPALVASISVLVIACPCALGLATPTSIMVGTGRAAENGILFKGGEFVERTHQIDTIVLDKTGTITNGCPVVTDYHGDDQTLQLLATAEKDSEHPLAEAIVNYAKEKQLTLTETTTFKAVPGHGIEATIDHHHILVGNRKLMADNDISLPKHISDDLTHYERDGKTAMLIAVNYSLTGIIAVADTVKDHAKDAIKQLHDMGIEVAMLTGDNKNTAQAIAKQVGIDTVIADILPEEKAAQITKLQQQGKKVAMVGDGVNDAPALVKADIGIAIGTGTEVAIEAADITILGGDLMLIPKAIYASKATIRNIRQNLFWAFGYNIAGIPIAALGLLAPWVAGAAMALSSVSVVTNALRLKKMRLEPRRKDA</sequence>
<organism>
    <name type="scientific">Staphylococcus aureus (strain MRSA252)</name>
    <dbReference type="NCBI Taxonomy" id="282458"/>
    <lineage>
        <taxon>Bacteria</taxon>
        <taxon>Bacillati</taxon>
        <taxon>Bacillota</taxon>
        <taxon>Bacilli</taxon>
        <taxon>Bacillales</taxon>
        <taxon>Staphylococcaceae</taxon>
        <taxon>Staphylococcus</taxon>
    </lineage>
</organism>
<dbReference type="EC" id="7.2.2.8"/>
<dbReference type="EMBL" id="BX571856">
    <property type="protein sequence ID" value="CAG41616.1"/>
    <property type="molecule type" value="Genomic_DNA"/>
</dbReference>
<dbReference type="RefSeq" id="WP_000024146.1">
    <property type="nucleotide sequence ID" value="NC_002952.2"/>
</dbReference>
<dbReference type="SMR" id="Q6GDP1"/>
<dbReference type="KEGG" id="sar:SAR2637"/>
<dbReference type="HOGENOM" id="CLU_001771_0_3_9"/>
<dbReference type="Proteomes" id="UP000000596">
    <property type="component" value="Chromosome"/>
</dbReference>
<dbReference type="GO" id="GO:0005886">
    <property type="term" value="C:plasma membrane"/>
    <property type="evidence" value="ECO:0007669"/>
    <property type="project" value="UniProtKB-SubCell"/>
</dbReference>
<dbReference type="GO" id="GO:0005524">
    <property type="term" value="F:ATP binding"/>
    <property type="evidence" value="ECO:0007669"/>
    <property type="project" value="UniProtKB-KW"/>
</dbReference>
<dbReference type="GO" id="GO:0016887">
    <property type="term" value="F:ATP hydrolysis activity"/>
    <property type="evidence" value="ECO:0007669"/>
    <property type="project" value="InterPro"/>
</dbReference>
<dbReference type="GO" id="GO:0005507">
    <property type="term" value="F:copper ion binding"/>
    <property type="evidence" value="ECO:0007669"/>
    <property type="project" value="InterPro"/>
</dbReference>
<dbReference type="GO" id="GO:0043682">
    <property type="term" value="F:P-type divalent copper transporter activity"/>
    <property type="evidence" value="ECO:0007669"/>
    <property type="project" value="TreeGrafter"/>
</dbReference>
<dbReference type="GO" id="GO:0140581">
    <property type="term" value="F:P-type monovalent copper transporter activity"/>
    <property type="evidence" value="ECO:0007669"/>
    <property type="project" value="UniProtKB-EC"/>
</dbReference>
<dbReference type="GO" id="GO:0055070">
    <property type="term" value="P:copper ion homeostasis"/>
    <property type="evidence" value="ECO:0007669"/>
    <property type="project" value="TreeGrafter"/>
</dbReference>
<dbReference type="CDD" id="cd00371">
    <property type="entry name" value="HMA"/>
    <property type="match status" value="2"/>
</dbReference>
<dbReference type="CDD" id="cd02094">
    <property type="entry name" value="P-type_ATPase_Cu-like"/>
    <property type="match status" value="1"/>
</dbReference>
<dbReference type="FunFam" id="3.40.1110.10:FF:000038">
    <property type="entry name" value="Copper-exporting P-type ATPase"/>
    <property type="match status" value="1"/>
</dbReference>
<dbReference type="FunFam" id="2.70.150.10:FF:000020">
    <property type="entry name" value="Copper-exporting P-type ATPase A"/>
    <property type="match status" value="1"/>
</dbReference>
<dbReference type="FunFam" id="3.30.70.100:FF:000005">
    <property type="entry name" value="Copper-exporting P-type ATPase A"/>
    <property type="match status" value="2"/>
</dbReference>
<dbReference type="FunFam" id="3.40.50.1000:FF:000144">
    <property type="entry name" value="copper-transporting ATPase 1 isoform X2"/>
    <property type="match status" value="1"/>
</dbReference>
<dbReference type="Gene3D" id="3.30.70.100">
    <property type="match status" value="2"/>
</dbReference>
<dbReference type="Gene3D" id="3.40.1110.10">
    <property type="entry name" value="Calcium-transporting ATPase, cytoplasmic domain N"/>
    <property type="match status" value="2"/>
</dbReference>
<dbReference type="Gene3D" id="2.70.150.10">
    <property type="entry name" value="Calcium-transporting ATPase, cytoplasmic transduction domain A"/>
    <property type="match status" value="1"/>
</dbReference>
<dbReference type="Gene3D" id="3.40.50.1000">
    <property type="entry name" value="HAD superfamily/HAD-like"/>
    <property type="match status" value="1"/>
</dbReference>
<dbReference type="InterPro" id="IPR023299">
    <property type="entry name" value="ATPase_P-typ_cyto_dom_N"/>
</dbReference>
<dbReference type="InterPro" id="IPR018303">
    <property type="entry name" value="ATPase_P-typ_P_site"/>
</dbReference>
<dbReference type="InterPro" id="IPR023298">
    <property type="entry name" value="ATPase_P-typ_TM_dom_sf"/>
</dbReference>
<dbReference type="InterPro" id="IPR008250">
    <property type="entry name" value="ATPase_P-typ_transduc_dom_A_sf"/>
</dbReference>
<dbReference type="InterPro" id="IPR036412">
    <property type="entry name" value="HAD-like_sf"/>
</dbReference>
<dbReference type="InterPro" id="IPR023214">
    <property type="entry name" value="HAD_sf"/>
</dbReference>
<dbReference type="InterPro" id="IPR017969">
    <property type="entry name" value="Heavy-metal-associated_CS"/>
</dbReference>
<dbReference type="InterPro" id="IPR006122">
    <property type="entry name" value="HMA_Cu_ion-bd"/>
</dbReference>
<dbReference type="InterPro" id="IPR006121">
    <property type="entry name" value="HMA_dom"/>
</dbReference>
<dbReference type="InterPro" id="IPR036163">
    <property type="entry name" value="HMA_dom_sf"/>
</dbReference>
<dbReference type="InterPro" id="IPR027256">
    <property type="entry name" value="P-typ_ATPase_IB"/>
</dbReference>
<dbReference type="InterPro" id="IPR001757">
    <property type="entry name" value="P_typ_ATPase"/>
</dbReference>
<dbReference type="InterPro" id="IPR044492">
    <property type="entry name" value="P_typ_ATPase_HD_dom"/>
</dbReference>
<dbReference type="NCBIfam" id="TIGR01511">
    <property type="entry name" value="ATPase-IB1_Cu"/>
    <property type="match status" value="1"/>
</dbReference>
<dbReference type="NCBIfam" id="TIGR01525">
    <property type="entry name" value="ATPase-IB_hvy"/>
    <property type="match status" value="1"/>
</dbReference>
<dbReference type="NCBIfam" id="TIGR01494">
    <property type="entry name" value="ATPase_P-type"/>
    <property type="match status" value="1"/>
</dbReference>
<dbReference type="NCBIfam" id="TIGR00003">
    <property type="entry name" value="copper ion binding protein"/>
    <property type="match status" value="2"/>
</dbReference>
<dbReference type="PANTHER" id="PTHR43520">
    <property type="entry name" value="ATP7, ISOFORM B"/>
    <property type="match status" value="1"/>
</dbReference>
<dbReference type="PANTHER" id="PTHR43520:SF8">
    <property type="entry name" value="P-TYPE CU(+) TRANSPORTER"/>
    <property type="match status" value="1"/>
</dbReference>
<dbReference type="Pfam" id="PF00122">
    <property type="entry name" value="E1-E2_ATPase"/>
    <property type="match status" value="1"/>
</dbReference>
<dbReference type="Pfam" id="PF00403">
    <property type="entry name" value="HMA"/>
    <property type="match status" value="2"/>
</dbReference>
<dbReference type="Pfam" id="PF00702">
    <property type="entry name" value="Hydrolase"/>
    <property type="match status" value="1"/>
</dbReference>
<dbReference type="PRINTS" id="PR00119">
    <property type="entry name" value="CATATPASE"/>
</dbReference>
<dbReference type="PRINTS" id="PR00943">
    <property type="entry name" value="CUATPASE"/>
</dbReference>
<dbReference type="SFLD" id="SFLDG00002">
    <property type="entry name" value="C1.7:_P-type_atpase_like"/>
    <property type="match status" value="1"/>
</dbReference>
<dbReference type="SFLD" id="SFLDF00027">
    <property type="entry name" value="p-type_atpase"/>
    <property type="match status" value="1"/>
</dbReference>
<dbReference type="SUPFAM" id="SSF81653">
    <property type="entry name" value="Calcium ATPase, transduction domain A"/>
    <property type="match status" value="1"/>
</dbReference>
<dbReference type="SUPFAM" id="SSF81665">
    <property type="entry name" value="Calcium ATPase, transmembrane domain M"/>
    <property type="match status" value="1"/>
</dbReference>
<dbReference type="SUPFAM" id="SSF56784">
    <property type="entry name" value="HAD-like"/>
    <property type="match status" value="1"/>
</dbReference>
<dbReference type="SUPFAM" id="SSF55008">
    <property type="entry name" value="HMA, heavy metal-associated domain"/>
    <property type="match status" value="2"/>
</dbReference>
<dbReference type="PROSITE" id="PS00154">
    <property type="entry name" value="ATPASE_E1_E2"/>
    <property type="match status" value="1"/>
</dbReference>
<dbReference type="PROSITE" id="PS01047">
    <property type="entry name" value="HMA_1"/>
    <property type="match status" value="2"/>
</dbReference>
<dbReference type="PROSITE" id="PS50846">
    <property type="entry name" value="HMA_2"/>
    <property type="match status" value="2"/>
</dbReference>
<evidence type="ECO:0000250" key="1"/>
<evidence type="ECO:0000255" key="2"/>
<evidence type="ECO:0000255" key="3">
    <source>
        <dbReference type="PROSITE-ProRule" id="PRU00280"/>
    </source>
</evidence>
<evidence type="ECO:0000305" key="4"/>
<keyword id="KW-0067">ATP-binding</keyword>
<keyword id="KW-1003">Cell membrane</keyword>
<keyword id="KW-0186">Copper</keyword>
<keyword id="KW-0187">Copper transport</keyword>
<keyword id="KW-0406">Ion transport</keyword>
<keyword id="KW-0460">Magnesium</keyword>
<keyword id="KW-0472">Membrane</keyword>
<keyword id="KW-0479">Metal-binding</keyword>
<keyword id="KW-0547">Nucleotide-binding</keyword>
<keyword id="KW-0597">Phosphoprotein</keyword>
<keyword id="KW-0677">Repeat</keyword>
<keyword id="KW-1278">Translocase</keyword>
<keyword id="KW-0812">Transmembrane</keyword>
<keyword id="KW-1133">Transmembrane helix</keyword>
<keyword id="KW-0813">Transport</keyword>
<proteinExistence type="inferred from homology"/>
<reference key="1">
    <citation type="journal article" date="2004" name="Proc. Natl. Acad. Sci. U.S.A.">
        <title>Complete genomes of two clinical Staphylococcus aureus strains: evidence for the rapid evolution of virulence and drug resistance.</title>
        <authorList>
            <person name="Holden M.T.G."/>
            <person name="Feil E.J."/>
            <person name="Lindsay J.A."/>
            <person name="Peacock S.J."/>
            <person name="Day N.P.J."/>
            <person name="Enright M.C."/>
            <person name="Foster T.J."/>
            <person name="Moore C.E."/>
            <person name="Hurst L."/>
            <person name="Atkin R."/>
            <person name="Barron A."/>
            <person name="Bason N."/>
            <person name="Bentley S.D."/>
            <person name="Chillingworth C."/>
            <person name="Chillingworth T."/>
            <person name="Churcher C."/>
            <person name="Clark L."/>
            <person name="Corton C."/>
            <person name="Cronin A."/>
            <person name="Doggett J."/>
            <person name="Dowd L."/>
            <person name="Feltwell T."/>
            <person name="Hance Z."/>
            <person name="Harris B."/>
            <person name="Hauser H."/>
            <person name="Holroyd S."/>
            <person name="Jagels K."/>
            <person name="James K.D."/>
            <person name="Lennard N."/>
            <person name="Line A."/>
            <person name="Mayes R."/>
            <person name="Moule S."/>
            <person name="Mungall K."/>
            <person name="Ormond D."/>
            <person name="Quail M.A."/>
            <person name="Rabbinowitsch E."/>
            <person name="Rutherford K.M."/>
            <person name="Sanders M."/>
            <person name="Sharp S."/>
            <person name="Simmonds M."/>
            <person name="Stevens K."/>
            <person name="Whitehead S."/>
            <person name="Barrell B.G."/>
            <person name="Spratt B.G."/>
            <person name="Parkhill J."/>
        </authorList>
    </citation>
    <scope>NUCLEOTIDE SEQUENCE [LARGE SCALE GENOMIC DNA]</scope>
    <source>
        <strain>MRSA252</strain>
    </source>
</reference>
<feature type="chain" id="PRO_0000350587" description="Copper-exporting P-type ATPase">
    <location>
        <begin position="1"/>
        <end position="802"/>
    </location>
</feature>
<feature type="transmembrane region" description="Helical" evidence="2">
    <location>
        <begin position="161"/>
        <end position="181"/>
    </location>
</feature>
<feature type="transmembrane region" description="Helical" evidence="2">
    <location>
        <begin position="192"/>
        <end position="212"/>
    </location>
</feature>
<feature type="transmembrane region" description="Helical" evidence="2">
    <location>
        <begin position="224"/>
        <end position="244"/>
    </location>
</feature>
<feature type="transmembrane region" description="Helical" evidence="2">
    <location>
        <begin position="256"/>
        <end position="276"/>
    </location>
</feature>
<feature type="transmembrane region" description="Helical" evidence="2">
    <location>
        <begin position="411"/>
        <end position="431"/>
    </location>
</feature>
<feature type="transmembrane region" description="Helical" evidence="2">
    <location>
        <begin position="438"/>
        <end position="458"/>
    </location>
</feature>
<feature type="transmembrane region" description="Helical" evidence="2">
    <location>
        <begin position="748"/>
        <end position="767"/>
    </location>
</feature>
<feature type="transmembrane region" description="Helical" evidence="2">
    <location>
        <begin position="771"/>
        <end position="790"/>
    </location>
</feature>
<feature type="domain" description="HMA 1" evidence="3">
    <location>
        <begin position="5"/>
        <end position="70"/>
    </location>
</feature>
<feature type="domain" description="HMA 2" evidence="3">
    <location>
        <begin position="72"/>
        <end position="138"/>
    </location>
</feature>
<feature type="active site" description="4-aspartylphosphate intermediate" evidence="1">
    <location>
        <position position="495"/>
    </location>
</feature>
<feature type="binding site" evidence="3">
    <location>
        <position position="16"/>
    </location>
    <ligand>
        <name>Cu(+)</name>
        <dbReference type="ChEBI" id="CHEBI:49552"/>
        <label>1</label>
    </ligand>
</feature>
<feature type="binding site" evidence="3">
    <location>
        <position position="19"/>
    </location>
    <ligand>
        <name>Cu(+)</name>
        <dbReference type="ChEBI" id="CHEBI:49552"/>
        <label>1</label>
    </ligand>
</feature>
<feature type="binding site" evidence="3">
    <location>
        <position position="83"/>
    </location>
    <ligand>
        <name>Cu(+)</name>
        <dbReference type="ChEBI" id="CHEBI:49552"/>
        <label>2</label>
    </ligand>
</feature>
<feature type="binding site" evidence="3">
    <location>
        <position position="86"/>
    </location>
    <ligand>
        <name>Cu(+)</name>
        <dbReference type="ChEBI" id="CHEBI:49552"/>
        <label>2</label>
    </ligand>
</feature>
<feature type="binding site">
    <location>
        <position position="690"/>
    </location>
    <ligand>
        <name>Mg(2+)</name>
        <dbReference type="ChEBI" id="CHEBI:18420"/>
    </ligand>
</feature>
<feature type="binding site">
    <location>
        <position position="694"/>
    </location>
    <ligand>
        <name>Mg(2+)</name>
        <dbReference type="ChEBI" id="CHEBI:18420"/>
    </ligand>
</feature>
<protein>
    <recommendedName>
        <fullName>Copper-exporting P-type ATPase</fullName>
        <ecNumber>7.2.2.8</ecNumber>
    </recommendedName>
    <alternativeName>
        <fullName>Copper-exporting P-type ATPase A</fullName>
    </alternativeName>
    <alternativeName>
        <fullName>Cu(+)-exporting ATPase</fullName>
    </alternativeName>
</protein>